<name>SYE_AERPE</name>
<organism>
    <name type="scientific">Aeropyrum pernix (strain ATCC 700893 / DSM 11879 / JCM 9820 / NBRC 100138 / K1)</name>
    <dbReference type="NCBI Taxonomy" id="272557"/>
    <lineage>
        <taxon>Archaea</taxon>
        <taxon>Thermoproteota</taxon>
        <taxon>Thermoprotei</taxon>
        <taxon>Desulfurococcales</taxon>
        <taxon>Desulfurococcaceae</taxon>
        <taxon>Aeropyrum</taxon>
    </lineage>
</organism>
<accession>Q9Y9H1</accession>
<sequence length="574" mass="66034">MGSEDLERLLLGYALRDAVKHGGRASVGSVMSMLLGDHPELRSRAREIASLAARVVEQVNSMPAGEQKRLLSEQYPELARFEEQREKGDKGLPPLPGAVEGRVKLRFAPNPDFVIHMGNARPAIVNHEYARMYKGRMVLRFEDTDPRTKTPLREAYDLIRQDLKWLGVSWDEEYIQSLRMEVFYSVARRAIERGCAYVDNCGREGKELLSRGEYCPTRDLGPEDNLELFEKMLEGEFYEGEAVVRMKTDPRHPNPSLRDWVAMRIIDTEKHPHPLVGSRYLVWPTYNFAVSVDDHMMEITHVLRGKEHQLNTEKQLAVYRCMGWRPPYFIHFGRLKLEGFILSKSKIRKLLEERPGEFMGYDDPRFGTIAGLRRRGVLAEAIRQIILEVGVKPTDATISWANLAAANRKLLDERADRIMYVEDPVEMEVELAQVECRAAEIPFHPSRPQRKRRITLCTGDKVLLTREDAVEGRQLRLMGLSNFTVSQGILREVDPSLEYARRMKLPIVQWVKKGGEASVEVLEPVELELRRHQGYAEDAIRGYGVDSRLQFVRYGFVRVDSVEDGVYRVIYTHK</sequence>
<proteinExistence type="inferred from homology"/>
<protein>
    <recommendedName>
        <fullName evidence="1">Glutamate--tRNA ligase</fullName>
        <ecNumber evidence="1">6.1.1.17</ecNumber>
    </recommendedName>
    <alternativeName>
        <fullName evidence="1">Glutamyl-tRNA synthetase</fullName>
        <shortName evidence="1">GluRS</shortName>
    </alternativeName>
</protein>
<reference key="1">
    <citation type="journal article" date="1999" name="DNA Res.">
        <title>Complete genome sequence of an aerobic hyper-thermophilic crenarchaeon, Aeropyrum pernix K1.</title>
        <authorList>
            <person name="Kawarabayasi Y."/>
            <person name="Hino Y."/>
            <person name="Horikawa H."/>
            <person name="Yamazaki S."/>
            <person name="Haikawa Y."/>
            <person name="Jin-no K."/>
            <person name="Takahashi M."/>
            <person name="Sekine M."/>
            <person name="Baba S."/>
            <person name="Ankai A."/>
            <person name="Kosugi H."/>
            <person name="Hosoyama A."/>
            <person name="Fukui S."/>
            <person name="Nagai Y."/>
            <person name="Nishijima K."/>
            <person name="Nakazawa H."/>
            <person name="Takamiya M."/>
            <person name="Masuda S."/>
            <person name="Funahashi T."/>
            <person name="Tanaka T."/>
            <person name="Kudoh Y."/>
            <person name="Yamazaki J."/>
            <person name="Kushida N."/>
            <person name="Oguchi A."/>
            <person name="Aoki K."/>
            <person name="Kubota K."/>
            <person name="Nakamura Y."/>
            <person name="Nomura N."/>
            <person name="Sako Y."/>
            <person name="Kikuchi H."/>
        </authorList>
    </citation>
    <scope>NUCLEOTIDE SEQUENCE [LARGE SCALE GENOMIC DNA]</scope>
    <source>
        <strain>ATCC 700893 / DSM 11879 / JCM 9820 / NBRC 100138 / K1</strain>
    </source>
</reference>
<evidence type="ECO:0000255" key="1">
    <source>
        <dbReference type="HAMAP-Rule" id="MF_02076"/>
    </source>
</evidence>
<keyword id="KW-0030">Aminoacyl-tRNA synthetase</keyword>
<keyword id="KW-0067">ATP-binding</keyword>
<keyword id="KW-0963">Cytoplasm</keyword>
<keyword id="KW-0436">Ligase</keyword>
<keyword id="KW-0547">Nucleotide-binding</keyword>
<keyword id="KW-0648">Protein biosynthesis</keyword>
<keyword id="KW-1185">Reference proteome</keyword>
<dbReference type="EC" id="6.1.1.17" evidence="1"/>
<dbReference type="EMBL" id="BA000002">
    <property type="protein sequence ID" value="BAA81329.2"/>
    <property type="molecule type" value="Genomic_DNA"/>
</dbReference>
<dbReference type="PIR" id="A72459">
    <property type="entry name" value="A72459"/>
</dbReference>
<dbReference type="RefSeq" id="WP_010866935.1">
    <property type="nucleotide sequence ID" value="NC_000854.2"/>
</dbReference>
<dbReference type="SMR" id="Q9Y9H1"/>
<dbReference type="STRING" id="272557.APE_2317.1"/>
<dbReference type="EnsemblBacteria" id="BAA81329">
    <property type="protein sequence ID" value="BAA81329"/>
    <property type="gene ID" value="APE_2317.1"/>
</dbReference>
<dbReference type="GeneID" id="1445342"/>
<dbReference type="KEGG" id="ape:APE_2317.1"/>
<dbReference type="PATRIC" id="fig|272557.25.peg.1546"/>
<dbReference type="eggNOG" id="arCOG04302">
    <property type="taxonomic scope" value="Archaea"/>
</dbReference>
<dbReference type="Proteomes" id="UP000002518">
    <property type="component" value="Chromosome"/>
</dbReference>
<dbReference type="GO" id="GO:0005829">
    <property type="term" value="C:cytosol"/>
    <property type="evidence" value="ECO:0007669"/>
    <property type="project" value="TreeGrafter"/>
</dbReference>
<dbReference type="GO" id="GO:0005524">
    <property type="term" value="F:ATP binding"/>
    <property type="evidence" value="ECO:0007669"/>
    <property type="project" value="UniProtKB-UniRule"/>
</dbReference>
<dbReference type="GO" id="GO:0004818">
    <property type="term" value="F:glutamate-tRNA ligase activity"/>
    <property type="evidence" value="ECO:0007669"/>
    <property type="project" value="UniProtKB-UniRule"/>
</dbReference>
<dbReference type="GO" id="GO:0043604">
    <property type="term" value="P:amide biosynthetic process"/>
    <property type="evidence" value="ECO:0007669"/>
    <property type="project" value="TreeGrafter"/>
</dbReference>
<dbReference type="GO" id="GO:0006424">
    <property type="term" value="P:glutamyl-tRNA aminoacylation"/>
    <property type="evidence" value="ECO:0007669"/>
    <property type="project" value="UniProtKB-UniRule"/>
</dbReference>
<dbReference type="CDD" id="cd09287">
    <property type="entry name" value="GluRS_non_core"/>
    <property type="match status" value="1"/>
</dbReference>
<dbReference type="Gene3D" id="2.40.240.100">
    <property type="match status" value="1"/>
</dbReference>
<dbReference type="Gene3D" id="3.40.50.620">
    <property type="entry name" value="HUPs"/>
    <property type="match status" value="1"/>
</dbReference>
<dbReference type="Gene3D" id="2.40.240.10">
    <property type="entry name" value="Ribosomal Protein L25, Chain P"/>
    <property type="match status" value="1"/>
</dbReference>
<dbReference type="HAMAP" id="MF_02076">
    <property type="entry name" value="Glu_tRNA_synth_type2"/>
    <property type="match status" value="1"/>
</dbReference>
<dbReference type="InterPro" id="IPR050132">
    <property type="entry name" value="Gln/Glu-tRNA_Ligase"/>
</dbReference>
<dbReference type="InterPro" id="IPR004526">
    <property type="entry name" value="Glu-tRNA-synth_arc/euk"/>
</dbReference>
<dbReference type="InterPro" id="IPR000924">
    <property type="entry name" value="Glu/Gln-tRNA-synth"/>
</dbReference>
<dbReference type="InterPro" id="IPR020058">
    <property type="entry name" value="Glu/Gln-tRNA-synth_Ib_cat-dom"/>
</dbReference>
<dbReference type="InterPro" id="IPR020059">
    <property type="entry name" value="Glu/Gln-tRNA-synth_Ib_codon-bd"/>
</dbReference>
<dbReference type="InterPro" id="IPR020056">
    <property type="entry name" value="Rbsml_bL25/Gln-tRNA_synth_N"/>
</dbReference>
<dbReference type="InterPro" id="IPR011035">
    <property type="entry name" value="Ribosomal_bL25/Gln-tRNA_synth"/>
</dbReference>
<dbReference type="InterPro" id="IPR014729">
    <property type="entry name" value="Rossmann-like_a/b/a_fold"/>
</dbReference>
<dbReference type="InterPro" id="IPR049437">
    <property type="entry name" value="tRNA-synt_1c_C2"/>
</dbReference>
<dbReference type="NCBIfam" id="TIGR00463">
    <property type="entry name" value="gltX_arch"/>
    <property type="match status" value="1"/>
</dbReference>
<dbReference type="NCBIfam" id="NF003169">
    <property type="entry name" value="PRK04156.1"/>
    <property type="match status" value="1"/>
</dbReference>
<dbReference type="PANTHER" id="PTHR43097:SF5">
    <property type="entry name" value="GLUTAMATE--TRNA LIGASE"/>
    <property type="match status" value="1"/>
</dbReference>
<dbReference type="PANTHER" id="PTHR43097">
    <property type="entry name" value="GLUTAMINE-TRNA LIGASE"/>
    <property type="match status" value="1"/>
</dbReference>
<dbReference type="Pfam" id="PF00749">
    <property type="entry name" value="tRNA-synt_1c"/>
    <property type="match status" value="1"/>
</dbReference>
<dbReference type="Pfam" id="PF03950">
    <property type="entry name" value="tRNA-synt_1c_C"/>
    <property type="match status" value="1"/>
</dbReference>
<dbReference type="Pfam" id="PF20974">
    <property type="entry name" value="tRNA-synt_1c_C2"/>
    <property type="match status" value="1"/>
</dbReference>
<dbReference type="PRINTS" id="PR00987">
    <property type="entry name" value="TRNASYNTHGLU"/>
</dbReference>
<dbReference type="SUPFAM" id="SSF52374">
    <property type="entry name" value="Nucleotidylyl transferase"/>
    <property type="match status" value="1"/>
</dbReference>
<dbReference type="SUPFAM" id="SSF50715">
    <property type="entry name" value="Ribosomal protein L25-like"/>
    <property type="match status" value="1"/>
</dbReference>
<comment type="function">
    <text evidence="1">Catalyzes the attachment of glutamate to tRNA(Glu) in a two-step reaction: glutamate is first activated by ATP to form Glu-AMP and then transferred to the acceptor end of tRNA(Glu).</text>
</comment>
<comment type="catalytic activity">
    <reaction evidence="1">
        <text>tRNA(Glu) + L-glutamate + ATP = L-glutamyl-tRNA(Glu) + AMP + diphosphate</text>
        <dbReference type="Rhea" id="RHEA:23540"/>
        <dbReference type="Rhea" id="RHEA-COMP:9663"/>
        <dbReference type="Rhea" id="RHEA-COMP:9680"/>
        <dbReference type="ChEBI" id="CHEBI:29985"/>
        <dbReference type="ChEBI" id="CHEBI:30616"/>
        <dbReference type="ChEBI" id="CHEBI:33019"/>
        <dbReference type="ChEBI" id="CHEBI:78442"/>
        <dbReference type="ChEBI" id="CHEBI:78520"/>
        <dbReference type="ChEBI" id="CHEBI:456215"/>
        <dbReference type="EC" id="6.1.1.17"/>
    </reaction>
</comment>
<comment type="subcellular location">
    <subcellularLocation>
        <location evidence="1">Cytoplasm</location>
    </subcellularLocation>
</comment>
<comment type="similarity">
    <text evidence="1">Belongs to the class-I aminoacyl-tRNA synthetase family. Glutamate--tRNA ligase type 2 subfamily.</text>
</comment>
<feature type="chain" id="PRO_0000119712" description="Glutamate--tRNA ligase">
    <location>
        <begin position="1"/>
        <end position="574"/>
    </location>
</feature>
<feature type="short sequence motif" description="'HIGH' region" evidence="1">
    <location>
        <begin position="109"/>
        <end position="119"/>
    </location>
</feature>
<gene>
    <name evidence="1" type="primary">gltX</name>
    <name type="ordered locus">APE_2317.1</name>
</gene>